<comment type="function">
    <text evidence="1">Negatively regulates transcription of bacterial ribonucleotide reductase nrd genes and operons by binding to NrdR-boxes.</text>
</comment>
<comment type="cofactor">
    <cofactor evidence="1">
        <name>Zn(2+)</name>
        <dbReference type="ChEBI" id="CHEBI:29105"/>
    </cofactor>
    <text evidence="1">Binds 1 zinc ion.</text>
</comment>
<comment type="similarity">
    <text evidence="1">Belongs to the NrdR family.</text>
</comment>
<name>NRDR_LACH4</name>
<evidence type="ECO:0000255" key="1">
    <source>
        <dbReference type="HAMAP-Rule" id="MF_00440"/>
    </source>
</evidence>
<evidence type="ECO:0000256" key="2">
    <source>
        <dbReference type="SAM" id="MobiDB-lite"/>
    </source>
</evidence>
<sequence length="155" mass="17956">MECPNCHQNASRVIDSRPSDENRAIRRRRECENCGFRFTTFERIETAPLLVIKNDGTREPFNRKKILHGVMAAGQKRPISSDQFEQLVDHVENKVRKQGISEISSKKIGQYVMDELADLDDVAYIRFASIYREFKDMSSFMKTMEDMMAKKGKGN</sequence>
<reference key="1">
    <citation type="journal article" date="2008" name="J. Bacteriol.">
        <title>Genome sequence of Lactobacillus helveticus: an organism distinguished by selective gene loss and IS element expansion.</title>
        <authorList>
            <person name="Callanan M."/>
            <person name="Kaleta P."/>
            <person name="O'Callaghan J."/>
            <person name="O'Sullivan O."/>
            <person name="Jordan K."/>
            <person name="McAuliffe O."/>
            <person name="Sangrador-Vegas A."/>
            <person name="Slattery L."/>
            <person name="Fitzgerald G.F."/>
            <person name="Beresford T."/>
            <person name="Ross R.P."/>
        </authorList>
    </citation>
    <scope>NUCLEOTIDE SEQUENCE [LARGE SCALE GENOMIC DNA]</scope>
    <source>
        <strain>DPC 4571</strain>
    </source>
</reference>
<feature type="chain" id="PRO_1000080766" description="Transcriptional repressor NrdR">
    <location>
        <begin position="1"/>
        <end position="155"/>
    </location>
</feature>
<feature type="domain" description="ATP-cone" evidence="1">
    <location>
        <begin position="49"/>
        <end position="139"/>
    </location>
</feature>
<feature type="zinc finger region" evidence="1">
    <location>
        <begin position="3"/>
        <end position="34"/>
    </location>
</feature>
<feature type="region of interest" description="Disordered" evidence="2">
    <location>
        <begin position="1"/>
        <end position="22"/>
    </location>
</feature>
<feature type="compositionally biased region" description="Polar residues" evidence="2">
    <location>
        <begin position="1"/>
        <end position="11"/>
    </location>
</feature>
<proteinExistence type="inferred from homology"/>
<dbReference type="EMBL" id="CP000517">
    <property type="protein sequence ID" value="ABX27530.1"/>
    <property type="molecule type" value="Genomic_DNA"/>
</dbReference>
<dbReference type="RefSeq" id="WP_003627138.1">
    <property type="nucleotide sequence ID" value="NC_010080.1"/>
</dbReference>
<dbReference type="SMR" id="A8YWE4"/>
<dbReference type="GeneID" id="83724913"/>
<dbReference type="KEGG" id="lhe:lhv_1614"/>
<dbReference type="eggNOG" id="COG1327">
    <property type="taxonomic scope" value="Bacteria"/>
</dbReference>
<dbReference type="HOGENOM" id="CLU_108412_0_0_9"/>
<dbReference type="Proteomes" id="UP000000790">
    <property type="component" value="Chromosome"/>
</dbReference>
<dbReference type="GO" id="GO:0005524">
    <property type="term" value="F:ATP binding"/>
    <property type="evidence" value="ECO:0007669"/>
    <property type="project" value="UniProtKB-KW"/>
</dbReference>
<dbReference type="GO" id="GO:0003677">
    <property type="term" value="F:DNA binding"/>
    <property type="evidence" value="ECO:0007669"/>
    <property type="project" value="UniProtKB-KW"/>
</dbReference>
<dbReference type="GO" id="GO:0008270">
    <property type="term" value="F:zinc ion binding"/>
    <property type="evidence" value="ECO:0007669"/>
    <property type="project" value="UniProtKB-UniRule"/>
</dbReference>
<dbReference type="GO" id="GO:0045892">
    <property type="term" value="P:negative regulation of DNA-templated transcription"/>
    <property type="evidence" value="ECO:0007669"/>
    <property type="project" value="UniProtKB-UniRule"/>
</dbReference>
<dbReference type="HAMAP" id="MF_00440">
    <property type="entry name" value="NrdR"/>
    <property type="match status" value="1"/>
</dbReference>
<dbReference type="InterPro" id="IPR005144">
    <property type="entry name" value="ATP-cone_dom"/>
</dbReference>
<dbReference type="InterPro" id="IPR055173">
    <property type="entry name" value="NrdR-like_N"/>
</dbReference>
<dbReference type="InterPro" id="IPR003796">
    <property type="entry name" value="RNR_NrdR-like"/>
</dbReference>
<dbReference type="NCBIfam" id="TIGR00244">
    <property type="entry name" value="transcriptional regulator NrdR"/>
    <property type="match status" value="1"/>
</dbReference>
<dbReference type="PANTHER" id="PTHR30455">
    <property type="entry name" value="TRANSCRIPTIONAL REPRESSOR NRDR"/>
    <property type="match status" value="1"/>
</dbReference>
<dbReference type="PANTHER" id="PTHR30455:SF2">
    <property type="entry name" value="TRANSCRIPTIONAL REPRESSOR NRDR"/>
    <property type="match status" value="1"/>
</dbReference>
<dbReference type="Pfam" id="PF03477">
    <property type="entry name" value="ATP-cone"/>
    <property type="match status" value="1"/>
</dbReference>
<dbReference type="Pfam" id="PF22811">
    <property type="entry name" value="Zn_ribbon_NrdR"/>
    <property type="match status" value="1"/>
</dbReference>
<dbReference type="PROSITE" id="PS51161">
    <property type="entry name" value="ATP_CONE"/>
    <property type="match status" value="1"/>
</dbReference>
<gene>
    <name evidence="1" type="primary">nrdR</name>
    <name type="ordered locus">lhv_1614</name>
</gene>
<protein>
    <recommendedName>
        <fullName evidence="1">Transcriptional repressor NrdR</fullName>
    </recommendedName>
</protein>
<organism>
    <name type="scientific">Lactobacillus helveticus (strain DPC 4571)</name>
    <dbReference type="NCBI Taxonomy" id="405566"/>
    <lineage>
        <taxon>Bacteria</taxon>
        <taxon>Bacillati</taxon>
        <taxon>Bacillota</taxon>
        <taxon>Bacilli</taxon>
        <taxon>Lactobacillales</taxon>
        <taxon>Lactobacillaceae</taxon>
        <taxon>Lactobacillus</taxon>
    </lineage>
</organism>
<keyword id="KW-0067">ATP-binding</keyword>
<keyword id="KW-0238">DNA-binding</keyword>
<keyword id="KW-0479">Metal-binding</keyword>
<keyword id="KW-0547">Nucleotide-binding</keyword>
<keyword id="KW-0678">Repressor</keyword>
<keyword id="KW-0804">Transcription</keyword>
<keyword id="KW-0805">Transcription regulation</keyword>
<keyword id="KW-0862">Zinc</keyword>
<keyword id="KW-0863">Zinc-finger</keyword>
<accession>A8YWE4</accession>